<reference key="1">
    <citation type="journal article" date="2007" name="PLoS Biol.">
        <title>Evolution of symbiotic bacteria in the distal human intestine.</title>
        <authorList>
            <person name="Xu J."/>
            <person name="Mahowald M.A."/>
            <person name="Ley R.E."/>
            <person name="Lozupone C.A."/>
            <person name="Hamady M."/>
            <person name="Martens E.C."/>
            <person name="Henrissat B."/>
            <person name="Coutinho P.M."/>
            <person name="Minx P."/>
            <person name="Latreille P."/>
            <person name="Cordum H."/>
            <person name="Van Brunt A."/>
            <person name="Kim K."/>
            <person name="Fulton R.S."/>
            <person name="Fulton L.A."/>
            <person name="Clifton S.W."/>
            <person name="Wilson R.K."/>
            <person name="Knight R.D."/>
            <person name="Gordon J.I."/>
        </authorList>
    </citation>
    <scope>NUCLEOTIDE SEQUENCE [LARGE SCALE GENOMIC DNA]</scope>
    <source>
        <strain>ATCC 8503 / DSM 20701 / CIP 104284 / JCM 5825 / NCTC 11152</strain>
    </source>
</reference>
<comment type="function">
    <text evidence="1">Protein S19 forms a complex with S13 that binds strongly to the 16S ribosomal RNA.</text>
</comment>
<comment type="similarity">
    <text evidence="1">Belongs to the universal ribosomal protein uS19 family.</text>
</comment>
<accession>A6LEI7</accession>
<dbReference type="EMBL" id="CP000140">
    <property type="protein sequence ID" value="ABR44101.1"/>
    <property type="molecule type" value="Genomic_DNA"/>
</dbReference>
<dbReference type="RefSeq" id="WP_005634738.1">
    <property type="nucleotide sequence ID" value="NZ_LR215978.1"/>
</dbReference>
<dbReference type="SMR" id="A6LEI7"/>
<dbReference type="STRING" id="435591.BDI_2376"/>
<dbReference type="PaxDb" id="435591-BDI_2376"/>
<dbReference type="GeneID" id="93522369"/>
<dbReference type="KEGG" id="pdi:BDI_2376"/>
<dbReference type="eggNOG" id="COG0185">
    <property type="taxonomic scope" value="Bacteria"/>
</dbReference>
<dbReference type="HOGENOM" id="CLU_144911_0_1_10"/>
<dbReference type="BioCyc" id="PDIS435591:G1G5A-2441-MONOMER"/>
<dbReference type="Proteomes" id="UP000000566">
    <property type="component" value="Chromosome"/>
</dbReference>
<dbReference type="GO" id="GO:0005737">
    <property type="term" value="C:cytoplasm"/>
    <property type="evidence" value="ECO:0007669"/>
    <property type="project" value="UniProtKB-ARBA"/>
</dbReference>
<dbReference type="GO" id="GO:0015935">
    <property type="term" value="C:small ribosomal subunit"/>
    <property type="evidence" value="ECO:0007669"/>
    <property type="project" value="InterPro"/>
</dbReference>
<dbReference type="GO" id="GO:0019843">
    <property type="term" value="F:rRNA binding"/>
    <property type="evidence" value="ECO:0007669"/>
    <property type="project" value="UniProtKB-UniRule"/>
</dbReference>
<dbReference type="GO" id="GO:0003735">
    <property type="term" value="F:structural constituent of ribosome"/>
    <property type="evidence" value="ECO:0007669"/>
    <property type="project" value="InterPro"/>
</dbReference>
<dbReference type="GO" id="GO:0000028">
    <property type="term" value="P:ribosomal small subunit assembly"/>
    <property type="evidence" value="ECO:0007669"/>
    <property type="project" value="TreeGrafter"/>
</dbReference>
<dbReference type="GO" id="GO:0006412">
    <property type="term" value="P:translation"/>
    <property type="evidence" value="ECO:0007669"/>
    <property type="project" value="UniProtKB-UniRule"/>
</dbReference>
<dbReference type="FunFam" id="3.30.860.10:FF:000001">
    <property type="entry name" value="30S ribosomal protein S19"/>
    <property type="match status" value="1"/>
</dbReference>
<dbReference type="Gene3D" id="3.30.860.10">
    <property type="entry name" value="30s Ribosomal Protein S19, Chain A"/>
    <property type="match status" value="1"/>
</dbReference>
<dbReference type="HAMAP" id="MF_00531">
    <property type="entry name" value="Ribosomal_uS19"/>
    <property type="match status" value="1"/>
</dbReference>
<dbReference type="InterPro" id="IPR002222">
    <property type="entry name" value="Ribosomal_uS19"/>
</dbReference>
<dbReference type="InterPro" id="IPR005732">
    <property type="entry name" value="Ribosomal_uS19_bac-type"/>
</dbReference>
<dbReference type="InterPro" id="IPR020934">
    <property type="entry name" value="Ribosomal_uS19_CS"/>
</dbReference>
<dbReference type="InterPro" id="IPR023575">
    <property type="entry name" value="Ribosomal_uS19_SF"/>
</dbReference>
<dbReference type="NCBIfam" id="TIGR01050">
    <property type="entry name" value="rpsS_bact"/>
    <property type="match status" value="1"/>
</dbReference>
<dbReference type="PANTHER" id="PTHR11880">
    <property type="entry name" value="RIBOSOMAL PROTEIN S19P FAMILY MEMBER"/>
    <property type="match status" value="1"/>
</dbReference>
<dbReference type="PANTHER" id="PTHR11880:SF8">
    <property type="entry name" value="SMALL RIBOSOMAL SUBUNIT PROTEIN US19M"/>
    <property type="match status" value="1"/>
</dbReference>
<dbReference type="Pfam" id="PF00203">
    <property type="entry name" value="Ribosomal_S19"/>
    <property type="match status" value="1"/>
</dbReference>
<dbReference type="PIRSF" id="PIRSF002144">
    <property type="entry name" value="Ribosomal_S19"/>
    <property type="match status" value="1"/>
</dbReference>
<dbReference type="PRINTS" id="PR00975">
    <property type="entry name" value="RIBOSOMALS19"/>
</dbReference>
<dbReference type="SUPFAM" id="SSF54570">
    <property type="entry name" value="Ribosomal protein S19"/>
    <property type="match status" value="1"/>
</dbReference>
<dbReference type="PROSITE" id="PS00323">
    <property type="entry name" value="RIBOSOMAL_S19"/>
    <property type="match status" value="1"/>
</dbReference>
<protein>
    <recommendedName>
        <fullName evidence="1">Small ribosomal subunit protein uS19</fullName>
    </recommendedName>
    <alternativeName>
        <fullName evidence="2">30S ribosomal protein S19</fullName>
    </alternativeName>
</protein>
<sequence>MSRSLKKGPYINVKLEKKVLAMNESGKKAVVKTWARASMISPDFVGHTIAVHNGNKFIPVFVTENMVGHKLGEFSPTRTFRGHAGNKKK</sequence>
<evidence type="ECO:0000255" key="1">
    <source>
        <dbReference type="HAMAP-Rule" id="MF_00531"/>
    </source>
</evidence>
<evidence type="ECO:0000305" key="2"/>
<keyword id="KW-1185">Reference proteome</keyword>
<keyword id="KW-0687">Ribonucleoprotein</keyword>
<keyword id="KW-0689">Ribosomal protein</keyword>
<keyword id="KW-0694">RNA-binding</keyword>
<keyword id="KW-0699">rRNA-binding</keyword>
<feature type="chain" id="PRO_1000051092" description="Small ribosomal subunit protein uS19">
    <location>
        <begin position="1"/>
        <end position="89"/>
    </location>
</feature>
<name>RS19_PARD8</name>
<gene>
    <name evidence="1" type="primary">rpsS</name>
    <name type="ordered locus">BDI_2376</name>
</gene>
<proteinExistence type="inferred from homology"/>
<organism>
    <name type="scientific">Parabacteroides distasonis (strain ATCC 8503 / DSM 20701 / CIP 104284 / JCM 5825 / NCTC 11152)</name>
    <dbReference type="NCBI Taxonomy" id="435591"/>
    <lineage>
        <taxon>Bacteria</taxon>
        <taxon>Pseudomonadati</taxon>
        <taxon>Bacteroidota</taxon>
        <taxon>Bacteroidia</taxon>
        <taxon>Bacteroidales</taxon>
        <taxon>Tannerellaceae</taxon>
        <taxon>Parabacteroides</taxon>
    </lineage>
</organism>